<feature type="signal peptide" evidence="1">
    <location>
        <begin position="1"/>
        <end position="25"/>
    </location>
</feature>
<feature type="chain" id="PRO_0000014623" description="T-cell surface glycoprotein CD4">
    <location>
        <begin position="26"/>
        <end position="458"/>
    </location>
</feature>
<feature type="topological domain" description="Extracellular" evidence="3">
    <location>
        <begin position="26"/>
        <end position="396"/>
    </location>
</feature>
<feature type="transmembrane region" description="Helical" evidence="3">
    <location>
        <begin position="397"/>
        <end position="418"/>
    </location>
</feature>
<feature type="topological domain" description="Cytoplasmic" evidence="3">
    <location>
        <begin position="419"/>
        <end position="458"/>
    </location>
</feature>
<feature type="domain" description="Ig-like V-type">
    <location>
        <begin position="26"/>
        <end position="125"/>
    </location>
</feature>
<feature type="domain" description="Ig-like C2-type 1">
    <location>
        <begin position="126"/>
        <end position="203"/>
    </location>
</feature>
<feature type="domain" description="Ig-like C2-type 2">
    <location>
        <begin position="204"/>
        <end position="317"/>
    </location>
</feature>
<feature type="domain" description="Ig-like C2-type 3">
    <location>
        <begin position="318"/>
        <end position="374"/>
    </location>
</feature>
<feature type="modified residue" description="Phosphoserine" evidence="2">
    <location>
        <position position="433"/>
    </location>
</feature>
<feature type="modified residue" description="Phosphoserine" evidence="2">
    <location>
        <position position="440"/>
    </location>
</feature>
<feature type="modified residue" description="Phosphoserine" evidence="2">
    <location>
        <position position="456"/>
    </location>
</feature>
<feature type="lipid moiety-binding region" description="S-palmitoyl cysteine" evidence="1">
    <location>
        <position position="419"/>
    </location>
</feature>
<feature type="lipid moiety-binding region" description="S-palmitoyl cysteine" evidence="1">
    <location>
        <position position="422"/>
    </location>
</feature>
<feature type="glycosylation site" description="N-linked (GlcNAc...) asparagine" evidence="3">
    <location>
        <position position="42"/>
    </location>
</feature>
<feature type="glycosylation site" description="N-linked (GlcNAc...) asparagine" evidence="1">
    <location>
        <position position="296"/>
    </location>
</feature>
<feature type="glycosylation site" description="N-linked (GlcNAc...) asparagine" evidence="1">
    <location>
        <position position="325"/>
    </location>
</feature>
<feature type="disulfide bond" evidence="4">
    <location>
        <begin position="41"/>
        <end position="109"/>
    </location>
</feature>
<feature type="disulfide bond" evidence="4">
    <location>
        <begin position="155"/>
        <end position="184"/>
    </location>
</feature>
<feature type="disulfide bond" evidence="4">
    <location>
        <begin position="328"/>
        <end position="370"/>
    </location>
</feature>
<comment type="function">
    <text evidence="2">Integral membrane glycoprotein that plays an essential role in the immune response and serves multiple functions in responses against both external and internal offenses. In T-cells, functions primarily as a coreceptor for MHC class II molecule:peptide complex. The antigens presented by class II peptides are derived from extracellular proteins while class I peptides are derived from cytosolic proteins. Interacts simultaneously with the T-cell receptor (TCR) and the MHC class II presented by antigen presenting cells (APCs). In turn, recruits the Src kinase LCK to the vicinity of the TCR-CD3 complex. LCK then initiates different intracellular signaling pathways by phosphorylating various substrates ultimately leading to lymphokine production, motility, adhesion and activation of T-helper cells. In other cells such as macrophages or NK cells, plays a role in differentiation/activation, cytokine expression and cell migration in a TCR/LCK-independent pathway. Participates in the development of T-helper cells in the thymus and triggers the differentiation of monocytes into functional mature macrophages.</text>
</comment>
<comment type="subunit">
    <text evidence="2">Forms disulfide-linked homodimers at the cell surface. Interacts with LCK. Interacts with PTK2/FAK1. Binds to P4HB/PDI. Interacts with IL16; this interaction induces a CD4-dependent signaling in lymphocytes. Interacts (via Ig-like V-type domain) with MHCII alpha chain (via alpha-2 domain) and beta chain (via beta-2 domain); this interaction increases the affinity of TCR for peptide-MHCII. CD4 oligomerization via Ig-like C2-type 2 and 3 domains appears to be required for stable binding to MHCII and adhesion between T cells and APCs.</text>
</comment>
<comment type="subcellular location">
    <subcellularLocation>
        <location evidence="2">Cell membrane</location>
        <topology evidence="2">Single-pass type I membrane protein</topology>
    </subcellularLocation>
    <text evidence="2">Localizes to lipid rafts.</text>
</comment>
<comment type="domain">
    <text evidence="2">The Ig-like V-type domain mediates the interaction with MHCII.</text>
</comment>
<comment type="PTM">
    <text evidence="2">Palmitoylation and association with LCK contribute to the enrichment of CD4 in lipid rafts.</text>
</comment>
<comment type="PTM">
    <text evidence="2">Phosphorylated by PKC; phosphorylation plays an important role for CD4 internalization.</text>
</comment>
<gene>
    <name type="primary">CD4</name>
</gene>
<evidence type="ECO:0000250" key="1"/>
<evidence type="ECO:0000250" key="2">
    <source>
        <dbReference type="UniProtKB" id="P01730"/>
    </source>
</evidence>
<evidence type="ECO:0000255" key="3"/>
<evidence type="ECO:0000255" key="4">
    <source>
        <dbReference type="PROSITE-ProRule" id="PRU00114"/>
    </source>
</evidence>
<organism>
    <name type="scientific">Macaca fuscata fuscata</name>
    <name type="common">Japanese macaque</name>
    <dbReference type="NCBI Taxonomy" id="9543"/>
    <lineage>
        <taxon>Eukaryota</taxon>
        <taxon>Metazoa</taxon>
        <taxon>Chordata</taxon>
        <taxon>Craniata</taxon>
        <taxon>Vertebrata</taxon>
        <taxon>Euteleostomi</taxon>
        <taxon>Mammalia</taxon>
        <taxon>Eutheria</taxon>
        <taxon>Euarchontoglires</taxon>
        <taxon>Primates</taxon>
        <taxon>Haplorrhini</taxon>
        <taxon>Catarrhini</taxon>
        <taxon>Cercopithecidae</taxon>
        <taxon>Cercopithecinae</taxon>
        <taxon>Macaca</taxon>
    </lineage>
</organism>
<proteinExistence type="evidence at transcript level"/>
<reference key="1">
    <citation type="submission" date="1997-02" db="EMBL/GenBank/DDBJ databases">
        <authorList>
            <person name="Hashimoto O."/>
            <person name="Tatsumi M."/>
        </authorList>
    </citation>
    <scope>NUCLEOTIDE SEQUENCE [MRNA]</scope>
</reference>
<name>CD4_MACFU</name>
<protein>
    <recommendedName>
        <fullName>T-cell surface glycoprotein CD4</fullName>
    </recommendedName>
    <alternativeName>
        <fullName>T-cell surface antigen T4/Leu-3</fullName>
    </alternativeName>
    <cdAntigenName>CD4</cdAntigenName>
</protein>
<dbReference type="EMBL" id="D63348">
    <property type="protein sequence ID" value="BAA09672.1"/>
    <property type="molecule type" value="mRNA"/>
</dbReference>
<dbReference type="SMR" id="P79184"/>
<dbReference type="GlyCosmos" id="P79184">
    <property type="glycosylation" value="3 sites, No reported glycans"/>
</dbReference>
<dbReference type="GO" id="GO:0009986">
    <property type="term" value="C:cell surface"/>
    <property type="evidence" value="ECO:0007669"/>
    <property type="project" value="UniProtKB-ARBA"/>
</dbReference>
<dbReference type="GO" id="GO:0005886">
    <property type="term" value="C:plasma membrane"/>
    <property type="evidence" value="ECO:0007669"/>
    <property type="project" value="UniProtKB-SubCell"/>
</dbReference>
<dbReference type="GO" id="GO:0015026">
    <property type="term" value="F:coreceptor activity"/>
    <property type="evidence" value="ECO:0007669"/>
    <property type="project" value="InterPro"/>
</dbReference>
<dbReference type="GO" id="GO:0023026">
    <property type="term" value="F:MHC class II protein complex binding"/>
    <property type="evidence" value="ECO:0000250"/>
    <property type="project" value="UniProtKB"/>
</dbReference>
<dbReference type="GO" id="GO:0002250">
    <property type="term" value="P:adaptive immune response"/>
    <property type="evidence" value="ECO:0007669"/>
    <property type="project" value="UniProtKB-KW"/>
</dbReference>
<dbReference type="GO" id="GO:0007155">
    <property type="term" value="P:cell adhesion"/>
    <property type="evidence" value="ECO:0007669"/>
    <property type="project" value="InterPro"/>
</dbReference>
<dbReference type="GO" id="GO:0030217">
    <property type="term" value="P:T cell differentiation"/>
    <property type="evidence" value="ECO:0000250"/>
    <property type="project" value="UniProtKB"/>
</dbReference>
<dbReference type="GO" id="GO:0045058">
    <property type="term" value="P:T cell selection"/>
    <property type="evidence" value="ECO:0000250"/>
    <property type="project" value="UniProtKB"/>
</dbReference>
<dbReference type="CDD" id="cd22570">
    <property type="entry name" value="CD4_CD"/>
    <property type="match status" value="1"/>
</dbReference>
<dbReference type="CDD" id="cd07695">
    <property type="entry name" value="IgV_3_CD4"/>
    <property type="match status" value="1"/>
</dbReference>
<dbReference type="FunFam" id="1.20.5.900:FF:000001">
    <property type="entry name" value="T-cell surface glycoprotein CD4"/>
    <property type="match status" value="1"/>
</dbReference>
<dbReference type="FunFam" id="2.60.40.10:FF:001105">
    <property type="entry name" value="T-cell surface glycoprotein CD4"/>
    <property type="match status" value="1"/>
</dbReference>
<dbReference type="FunFam" id="2.60.40.10:FF:001204">
    <property type="entry name" value="T-cell surface glycoprotein CD4"/>
    <property type="match status" value="1"/>
</dbReference>
<dbReference type="FunFam" id="2.60.40.10:FF:001221">
    <property type="entry name" value="T-cell surface glycoprotein CD4"/>
    <property type="match status" value="1"/>
</dbReference>
<dbReference type="FunFam" id="2.60.40.10:FF:001253">
    <property type="entry name" value="T-cell surface glycoprotein CD4"/>
    <property type="match status" value="1"/>
</dbReference>
<dbReference type="Gene3D" id="2.60.40.10">
    <property type="entry name" value="Immunoglobulins"/>
    <property type="match status" value="4"/>
</dbReference>
<dbReference type="Gene3D" id="1.20.5.900">
    <property type="entry name" value="transmembrane domain of human cd4"/>
    <property type="match status" value="1"/>
</dbReference>
<dbReference type="InterPro" id="IPR000973">
    <property type="entry name" value="CD4"/>
</dbReference>
<dbReference type="InterPro" id="IPR015274">
    <property type="entry name" value="CD4-extracel"/>
</dbReference>
<dbReference type="InterPro" id="IPR007110">
    <property type="entry name" value="Ig-like_dom"/>
</dbReference>
<dbReference type="InterPro" id="IPR036179">
    <property type="entry name" value="Ig-like_dom_sf"/>
</dbReference>
<dbReference type="InterPro" id="IPR013783">
    <property type="entry name" value="Ig-like_fold"/>
</dbReference>
<dbReference type="InterPro" id="IPR008424">
    <property type="entry name" value="Ig_C2-set"/>
</dbReference>
<dbReference type="InterPro" id="IPR003599">
    <property type="entry name" value="Ig_sub"/>
</dbReference>
<dbReference type="InterPro" id="IPR013106">
    <property type="entry name" value="Ig_V-set"/>
</dbReference>
<dbReference type="InterPro" id="IPR013151">
    <property type="entry name" value="Immunoglobulin_dom"/>
</dbReference>
<dbReference type="InterPro" id="IPR021963">
    <property type="entry name" value="Tcell_CD4_Cterm"/>
</dbReference>
<dbReference type="PANTHER" id="PTHR11422">
    <property type="entry name" value="T-CELL SURFACE GLYCOPROTEIN CD4"/>
    <property type="match status" value="1"/>
</dbReference>
<dbReference type="PANTHER" id="PTHR11422:SF0">
    <property type="entry name" value="T-CELL SURFACE GLYCOPROTEIN CD4"/>
    <property type="match status" value="1"/>
</dbReference>
<dbReference type="Pfam" id="PF05790">
    <property type="entry name" value="C2-set"/>
    <property type="match status" value="2"/>
</dbReference>
<dbReference type="Pfam" id="PF09191">
    <property type="entry name" value="CD4-extracel"/>
    <property type="match status" value="1"/>
</dbReference>
<dbReference type="Pfam" id="PF00047">
    <property type="entry name" value="ig"/>
    <property type="match status" value="1"/>
</dbReference>
<dbReference type="Pfam" id="PF12104">
    <property type="entry name" value="Tcell_CD4_C"/>
    <property type="match status" value="1"/>
</dbReference>
<dbReference type="PRINTS" id="PR00692">
    <property type="entry name" value="CD4TCANTIGEN"/>
</dbReference>
<dbReference type="SMART" id="SM00409">
    <property type="entry name" value="IG"/>
    <property type="match status" value="3"/>
</dbReference>
<dbReference type="SMART" id="SM00406">
    <property type="entry name" value="IGv"/>
    <property type="match status" value="1"/>
</dbReference>
<dbReference type="SUPFAM" id="SSF48726">
    <property type="entry name" value="Immunoglobulin"/>
    <property type="match status" value="4"/>
</dbReference>
<dbReference type="PROSITE" id="PS50835">
    <property type="entry name" value="IG_LIKE"/>
    <property type="match status" value="1"/>
</dbReference>
<sequence>MNRGIPFRHLLLVLQLALLPAVTQGKKVVLGKKGDTVELTCNASQKKNTQFHWKNSNQIKILGIQGSFLTKGPSKLSDRADSRKSLWDQGCFSMIIKNLKIEDSDTYICEVENKKEEVELLVFGLTANSDTHLLEGQSLTLTLESPPGSSPSVKCRSPGGKNIQGGRTISVPQLERQDSGTWTCTVSQDQKTVEFKIDIVVLAFQKASSTVYKKEGEQVEFSFPLAFTLEKLTGSGELWWQAERASSSKSWITFDLKNKEVSVKRVTQDPKLQMGKKLPLHLTLPQALPQYAGSGNLTLALEAKTGKLHQEVNLVVMRAAQFQENLTCEVWGPTSPKLTLSLKLENKGATVSKQAKAVWVLNPEAGMWQCLLSDSGQVLLESNIKVVPTWPTPVQPMALIVLGGVAGLLLFTGLGIFFCVRCRHRRRQAERMSQIKRLLSEKKTCQCPHRFQKTCSPI</sequence>
<keyword id="KW-1064">Adaptive immunity</keyword>
<keyword id="KW-1003">Cell membrane</keyword>
<keyword id="KW-1015">Disulfide bond</keyword>
<keyword id="KW-0325">Glycoprotein</keyword>
<keyword id="KW-0391">Immunity</keyword>
<keyword id="KW-0393">Immunoglobulin domain</keyword>
<keyword id="KW-0449">Lipoprotein</keyword>
<keyword id="KW-0472">Membrane</keyword>
<keyword id="KW-0564">Palmitate</keyword>
<keyword id="KW-0597">Phosphoprotein</keyword>
<keyword id="KW-0677">Repeat</keyword>
<keyword id="KW-0732">Signal</keyword>
<keyword id="KW-0812">Transmembrane</keyword>
<keyword id="KW-1133">Transmembrane helix</keyword>
<accession>P79184</accession>